<sequence>MDPCECAKTGTCNCGATCKCTNCQCTTCKKSCCSCCPSGCSKCASGCVCKGNSCGSSCCQ</sequence>
<keyword id="KW-0479">Metal-binding</keyword>
<keyword id="KW-0480">Metal-thiolate cluster</keyword>
<keyword id="KW-1185">Reference proteome</keyword>
<protein>
    <recommendedName>
        <fullName>Metallothionein-2</fullName>
        <shortName>MT-2</shortName>
    </recommendedName>
</protein>
<gene>
    <name type="primary">mt2</name>
</gene>
<comment type="function">
    <text evidence="1">Metallothioneins have a high content of cysteine residues that bind various heavy metals.</text>
</comment>
<comment type="developmental stage">
    <text evidence="4">Expressed both maternally and zygotically. Expressed ubiquitously during early embryogenesis, but becomes localized to the tail region during segmentation. During early larval development, expressed in discrete areas including the pronephric region, retina and cerebellum.</text>
</comment>
<comment type="induction">
    <text evidence="4">By zinc ions.</text>
</comment>
<comment type="domain">
    <text>Class I metallothioneins contain 2 metal-binding domains: four divalent ions are chelated within cluster A of the alpha domain and are coordinated via cysteinyl thiolate bridges to 11 cysteine ligands. Cluster B, the corresponding region within the beta domain, can ligate three divalent ions to 9 cysteines.</text>
</comment>
<comment type="similarity">
    <text evidence="5">Belongs to the metallothionein superfamily. Type 1 family.</text>
</comment>
<accession>Q7ZSY6</accession>
<reference key="1">
    <citation type="journal article" date="2002" name="Mar. Environ. Res.">
        <title>Characterization of zebrafish metallothionein gene promoter in a zebrafish caudal fin cell-line, SJD. 1.</title>
        <authorList>
            <person name="Yan C.H.M."/>
            <person name="Chan K.M."/>
        </authorList>
    </citation>
    <scope>NUCLEOTIDE SEQUENCE [GENOMIC DNA]</scope>
</reference>
<reference key="2">
    <citation type="journal article" date="2004" name="Aquat. Toxicol.">
        <title>Expression of metallothionein gene during embryonic and early larval development in zebrafish.</title>
        <authorList>
            <person name="Chen W.-Y."/>
            <person name="John J.A.C."/>
            <person name="Lin C.-H."/>
            <person name="Lin H.-F."/>
            <person name="Wu S.-C."/>
            <person name="Lin C.-H."/>
            <person name="Chang C.-Y."/>
        </authorList>
    </citation>
    <scope>NUCLEOTIDE SEQUENCE [GENOMIC DNA / MRNA]</scope>
    <scope>DEVELOPMENTAL STAGE</scope>
    <scope>INDUCTION</scope>
    <source>
        <tissue>Brain</tissue>
    </source>
</reference>
<reference key="3">
    <citation type="submission" date="2003-04" db="EMBL/GenBank/DDBJ databases">
        <authorList>
            <consortium name="NIH - Zebrafish Gene Collection (ZGC) project"/>
        </authorList>
    </citation>
    <scope>NUCLEOTIDE SEQUENCE [LARGE SCALE MRNA]</scope>
    <source>
        <strain>SJD</strain>
    </source>
</reference>
<organism>
    <name type="scientific">Danio rerio</name>
    <name type="common">Zebrafish</name>
    <name type="synonym">Brachydanio rerio</name>
    <dbReference type="NCBI Taxonomy" id="7955"/>
    <lineage>
        <taxon>Eukaryota</taxon>
        <taxon>Metazoa</taxon>
        <taxon>Chordata</taxon>
        <taxon>Craniata</taxon>
        <taxon>Vertebrata</taxon>
        <taxon>Euteleostomi</taxon>
        <taxon>Actinopterygii</taxon>
        <taxon>Neopterygii</taxon>
        <taxon>Teleostei</taxon>
        <taxon>Ostariophysi</taxon>
        <taxon>Cypriniformes</taxon>
        <taxon>Danionidae</taxon>
        <taxon>Danioninae</taxon>
        <taxon>Danio</taxon>
    </lineage>
</organism>
<evidence type="ECO:0000250" key="1"/>
<evidence type="ECO:0000250" key="2">
    <source>
        <dbReference type="UniProtKB" id="P02795"/>
    </source>
</evidence>
<evidence type="ECO:0000250" key="3">
    <source>
        <dbReference type="UniProtKB" id="P62339"/>
    </source>
</evidence>
<evidence type="ECO:0000269" key="4">
    <source>
    </source>
</evidence>
<evidence type="ECO:0000305" key="5"/>
<dbReference type="EMBL" id="AY305851">
    <property type="protein sequence ID" value="AAP73739.1"/>
    <property type="molecule type" value="Genomic_DNA"/>
</dbReference>
<dbReference type="EMBL" id="AY514790">
    <property type="protein sequence ID" value="AAS00513.1"/>
    <property type="molecule type" value="mRNA"/>
</dbReference>
<dbReference type="EMBL" id="AY514791">
    <property type="protein sequence ID" value="AAS00514.1"/>
    <property type="molecule type" value="Genomic_DNA"/>
</dbReference>
<dbReference type="EMBL" id="BC049475">
    <property type="protein sequence ID" value="AAH49475.1"/>
    <property type="molecule type" value="mRNA"/>
</dbReference>
<dbReference type="EMBL" id="BC051612">
    <property type="protein sequence ID" value="AAH51612.1"/>
    <property type="molecule type" value="mRNA"/>
</dbReference>
<dbReference type="RefSeq" id="NP_001124525.2">
    <property type="nucleotide sequence ID" value="NM_001131053.3"/>
</dbReference>
<dbReference type="SMR" id="Q7ZSY6"/>
<dbReference type="STRING" id="7955.ENSDARP00000061006"/>
<dbReference type="PaxDb" id="7955-ENSDARP00000061006"/>
<dbReference type="Ensembl" id="ENSDART00000061007">
    <property type="protein sequence ID" value="ENSDARP00000061006"/>
    <property type="gene ID" value="ENSDARG00000041623"/>
</dbReference>
<dbReference type="Ensembl" id="ENSDART00000186782">
    <property type="protein sequence ID" value="ENSDARP00000148298"/>
    <property type="gene ID" value="ENSDARG00000113583"/>
</dbReference>
<dbReference type="GeneID" id="100174951"/>
<dbReference type="KEGG" id="dre:100174951"/>
<dbReference type="AGR" id="ZFIN:ZDB-GENE-030131-4174"/>
<dbReference type="CTD" id="17750"/>
<dbReference type="ZFIN" id="ZDB-GENE-030131-4174">
    <property type="gene designation" value="mt2"/>
</dbReference>
<dbReference type="eggNOG" id="ENOG502SGCJ">
    <property type="taxonomic scope" value="Eukaryota"/>
</dbReference>
<dbReference type="HOGENOM" id="CLU_171204_2_0_1"/>
<dbReference type="OMA" id="HICETQC"/>
<dbReference type="OrthoDB" id="1918363at2759"/>
<dbReference type="Proteomes" id="UP000000437">
    <property type="component" value="Alternate scaffold 18"/>
</dbReference>
<dbReference type="Proteomes" id="UP000000437">
    <property type="component" value="Chromosome 18"/>
</dbReference>
<dbReference type="Bgee" id="ENSDARG00000041623">
    <property type="expression patterns" value="Expressed in mesonephros and 27 other cell types or tissues"/>
</dbReference>
<dbReference type="ExpressionAtlas" id="Q7ZSY6">
    <property type="expression patterns" value="baseline and differential"/>
</dbReference>
<dbReference type="GO" id="GO:0046872">
    <property type="term" value="F:metal ion binding"/>
    <property type="evidence" value="ECO:0007669"/>
    <property type="project" value="UniProtKB-KW"/>
</dbReference>
<dbReference type="GO" id="GO:0001525">
    <property type="term" value="P:angiogenesis"/>
    <property type="evidence" value="ECO:0000315"/>
    <property type="project" value="ZFIN"/>
</dbReference>
<dbReference type="GO" id="GO:0090050">
    <property type="term" value="P:positive regulation of cell migration involved in sprouting angiogenesis"/>
    <property type="evidence" value="ECO:0000315"/>
    <property type="project" value="ZFIN"/>
</dbReference>
<dbReference type="GO" id="GO:0010575">
    <property type="term" value="P:positive regulation of vascular endothelial growth factor production"/>
    <property type="evidence" value="ECO:0000315"/>
    <property type="project" value="ZFIN"/>
</dbReference>
<dbReference type="GO" id="GO:0046686">
    <property type="term" value="P:response to cadmium ion"/>
    <property type="evidence" value="ECO:0000270"/>
    <property type="project" value="ZFIN"/>
</dbReference>
<dbReference type="GO" id="GO:0046688">
    <property type="term" value="P:response to copper ion"/>
    <property type="evidence" value="ECO:0000314"/>
    <property type="project" value="ZFIN"/>
</dbReference>
<dbReference type="GO" id="GO:0010038">
    <property type="term" value="P:response to metal ion"/>
    <property type="evidence" value="ECO:0000314"/>
    <property type="project" value="ZFIN"/>
</dbReference>
<dbReference type="GO" id="GO:0051597">
    <property type="term" value="P:response to methylmercury"/>
    <property type="evidence" value="ECO:0000314"/>
    <property type="project" value="ZFIN"/>
</dbReference>
<dbReference type="GO" id="GO:0010043">
    <property type="term" value="P:response to zinc ion"/>
    <property type="evidence" value="ECO:0000314"/>
    <property type="project" value="ZFIN"/>
</dbReference>
<dbReference type="FunFam" id="4.10.10.10:FF:000001">
    <property type="entry name" value="Metallothionein"/>
    <property type="match status" value="1"/>
</dbReference>
<dbReference type="Gene3D" id="4.10.10.10">
    <property type="entry name" value="Metallothionein Isoform II"/>
    <property type="match status" value="1"/>
</dbReference>
<dbReference type="InterPro" id="IPR017854">
    <property type="entry name" value="Metalthion_dom_sf"/>
</dbReference>
<dbReference type="InterPro" id="IPR023587">
    <property type="entry name" value="Metalthion_dom_sf_vert"/>
</dbReference>
<dbReference type="InterPro" id="IPR000006">
    <property type="entry name" value="Metalthion_vert"/>
</dbReference>
<dbReference type="InterPro" id="IPR018064">
    <property type="entry name" value="Metalthion_vert_metal_BS"/>
</dbReference>
<dbReference type="PANTHER" id="PTHR23299">
    <property type="entry name" value="METALLOTHIONEIN"/>
    <property type="match status" value="1"/>
</dbReference>
<dbReference type="PANTHER" id="PTHR23299:SF24">
    <property type="entry name" value="METALLOTHIONEIN-1X"/>
    <property type="match status" value="1"/>
</dbReference>
<dbReference type="Pfam" id="PF00131">
    <property type="entry name" value="Metallothio"/>
    <property type="match status" value="1"/>
</dbReference>
<dbReference type="PRINTS" id="PR00860">
    <property type="entry name" value="MTVERTEBRATE"/>
</dbReference>
<dbReference type="SUPFAM" id="SSF57868">
    <property type="entry name" value="Metallothionein"/>
    <property type="match status" value="1"/>
</dbReference>
<dbReference type="PROSITE" id="PS00203">
    <property type="entry name" value="METALLOTHIONEIN_VRT"/>
    <property type="match status" value="1"/>
</dbReference>
<name>MT2_DANRE</name>
<proteinExistence type="evidence at transcript level"/>
<feature type="chain" id="PRO_0000197269" description="Metallothionein-2">
    <location>
        <begin position="1"/>
        <end position="60"/>
    </location>
</feature>
<feature type="region of interest" description="Beta">
    <location>
        <begin position="1"/>
        <end position="28"/>
    </location>
</feature>
<feature type="region of interest" description="Alpha">
    <location>
        <begin position="29"/>
        <end position="60"/>
    </location>
</feature>
<feature type="binding site" evidence="2">
    <location>
        <position position="4"/>
    </location>
    <ligand>
        <name>a divalent metal cation</name>
        <dbReference type="ChEBI" id="CHEBI:60240"/>
        <label>1</label>
        <note>in cluster B</note>
    </ligand>
</feature>
<feature type="binding site" evidence="2">
    <location>
        <position position="6"/>
    </location>
    <ligand>
        <name>a divalent metal cation</name>
        <dbReference type="ChEBI" id="CHEBI:60240"/>
        <label>1</label>
        <note>in cluster B</note>
    </ligand>
</feature>
<feature type="binding site" evidence="2">
    <location>
        <position position="6"/>
    </location>
    <ligand>
        <name>a divalent metal cation</name>
        <dbReference type="ChEBI" id="CHEBI:60240"/>
        <label>2</label>
        <note>in cluster B</note>
    </ligand>
</feature>
<feature type="binding site" evidence="2">
    <location>
        <position position="12"/>
    </location>
    <ligand>
        <name>a divalent metal cation</name>
        <dbReference type="ChEBI" id="CHEBI:60240"/>
        <label>2</label>
        <note>in cluster B</note>
    </ligand>
</feature>
<feature type="binding site" evidence="2">
    <location>
        <position position="14"/>
    </location>
    <ligand>
        <name>a divalent metal cation</name>
        <dbReference type="ChEBI" id="CHEBI:60240"/>
        <label>2</label>
        <note>in cluster B</note>
    </ligand>
</feature>
<feature type="binding site" evidence="2">
    <location>
        <position position="14"/>
    </location>
    <ligand>
        <name>a divalent metal cation</name>
        <dbReference type="ChEBI" id="CHEBI:60240"/>
        <label>3</label>
        <note>in cluster B</note>
    </ligand>
</feature>
<feature type="binding site" evidence="2">
    <location>
        <position position="18"/>
    </location>
    <ligand>
        <name>a divalent metal cation</name>
        <dbReference type="ChEBI" id="CHEBI:60240"/>
        <label>3</label>
        <note>in cluster B</note>
    </ligand>
</feature>
<feature type="binding site" evidence="2">
    <location>
        <position position="20"/>
    </location>
    <ligand>
        <name>a divalent metal cation</name>
        <dbReference type="ChEBI" id="CHEBI:60240"/>
        <label>1</label>
        <note>in cluster B</note>
    </ligand>
</feature>
<feature type="binding site" evidence="2">
    <location>
        <position position="23"/>
    </location>
    <ligand>
        <name>a divalent metal cation</name>
        <dbReference type="ChEBI" id="CHEBI:60240"/>
        <label>1</label>
        <note>in cluster B</note>
    </ligand>
</feature>
<feature type="binding site" evidence="2">
    <location>
        <position position="23"/>
    </location>
    <ligand>
        <name>a divalent metal cation</name>
        <dbReference type="ChEBI" id="CHEBI:60240"/>
        <label>3</label>
        <note>in cluster B</note>
    </ligand>
</feature>
<feature type="binding site" evidence="2">
    <location>
        <position position="25"/>
    </location>
    <ligand>
        <name>a divalent metal cation</name>
        <dbReference type="ChEBI" id="CHEBI:60240"/>
        <label>2</label>
        <note>in cluster B</note>
    </ligand>
</feature>
<feature type="binding site" evidence="2">
    <location>
        <position position="28"/>
    </location>
    <ligand>
        <name>a divalent metal cation</name>
        <dbReference type="ChEBI" id="CHEBI:60240"/>
        <label>3</label>
        <note>in cluster B</note>
    </ligand>
</feature>
<feature type="binding site" evidence="2">
    <location>
        <position position="32"/>
    </location>
    <ligand>
        <name>a divalent metal cation</name>
        <dbReference type="ChEBI" id="CHEBI:60240"/>
        <label>4</label>
        <note>in cluster A</note>
    </ligand>
</feature>
<feature type="binding site" evidence="2">
    <location>
        <position position="33"/>
    </location>
    <ligand>
        <name>a divalent metal cation</name>
        <dbReference type="ChEBI" id="CHEBI:60240"/>
        <label>4</label>
        <note>in cluster A</note>
    </ligand>
</feature>
<feature type="binding site" evidence="2">
    <location>
        <position position="33"/>
    </location>
    <ligand>
        <name>a divalent metal cation</name>
        <dbReference type="ChEBI" id="CHEBI:60240"/>
        <label>5</label>
        <note>in cluster A</note>
    </ligand>
</feature>
<feature type="binding site" evidence="2">
    <location>
        <position position="35"/>
    </location>
    <ligand>
        <name>a divalent metal cation</name>
        <dbReference type="ChEBI" id="CHEBI:60240"/>
        <label>5</label>
        <note>in cluster A</note>
    </ligand>
</feature>
<feature type="binding site" evidence="2">
    <location>
        <position position="36"/>
    </location>
    <ligand>
        <name>a divalent metal cation</name>
        <dbReference type="ChEBI" id="CHEBI:60240"/>
        <label>5</label>
        <note>in cluster A</note>
    </ligand>
</feature>
<feature type="binding site" evidence="2">
    <location>
        <position position="36"/>
    </location>
    <ligand>
        <name>a divalent metal cation</name>
        <dbReference type="ChEBI" id="CHEBI:60240"/>
        <label>6</label>
        <note>in cluster A</note>
    </ligand>
</feature>
<feature type="binding site" evidence="2">
    <location>
        <position position="40"/>
    </location>
    <ligand>
        <name>a divalent metal cation</name>
        <dbReference type="ChEBI" id="CHEBI:60240"/>
        <label>6</label>
        <note>in cluster A</note>
    </ligand>
</feature>
<feature type="binding site" evidence="2">
    <location>
        <position position="43"/>
    </location>
    <ligand>
        <name>a divalent metal cation</name>
        <dbReference type="ChEBI" id="CHEBI:60240"/>
        <label>4</label>
        <note>in cluster A</note>
    </ligand>
</feature>
<feature type="binding site" evidence="2">
    <location>
        <position position="43"/>
    </location>
    <ligand>
        <name>a divalent metal cation</name>
        <dbReference type="ChEBI" id="CHEBI:60240"/>
        <label>6</label>
        <note>in cluster A</note>
    </ligand>
</feature>
<feature type="binding site" evidence="2">
    <location>
        <position position="47"/>
    </location>
    <ligand>
        <name>a divalent metal cation</name>
        <dbReference type="ChEBI" id="CHEBI:60240"/>
        <label>4</label>
        <note>in cluster A</note>
    </ligand>
</feature>
<feature type="binding site" evidence="2">
    <location>
        <position position="49"/>
    </location>
    <ligand>
        <name>a divalent metal cation</name>
        <dbReference type="ChEBI" id="CHEBI:60240"/>
        <label>5</label>
        <note>in cluster A</note>
    </ligand>
</feature>
<feature type="binding site" evidence="2">
    <location>
        <position position="49"/>
    </location>
    <ligand>
        <name>a divalent metal cation</name>
        <dbReference type="ChEBI" id="CHEBI:60240"/>
        <label>7</label>
        <note>in cluster A</note>
    </ligand>
</feature>
<feature type="binding site" evidence="3">
    <location>
        <position position="54"/>
    </location>
    <ligand>
        <name>a divalent metal cation</name>
        <dbReference type="ChEBI" id="CHEBI:60240"/>
        <label>7</label>
        <note>in cluster A</note>
    </ligand>
</feature>
<feature type="binding site" evidence="2">
    <location>
        <position position="58"/>
    </location>
    <ligand>
        <name>a divalent metal cation</name>
        <dbReference type="ChEBI" id="CHEBI:60240"/>
        <label>7</label>
        <note>in cluster A</note>
    </ligand>
</feature>
<feature type="binding site" evidence="2">
    <location>
        <position position="59"/>
    </location>
    <ligand>
        <name>a divalent metal cation</name>
        <dbReference type="ChEBI" id="CHEBI:60240"/>
        <label>6</label>
        <note>in cluster A</note>
    </ligand>
</feature>
<feature type="binding site" evidence="2">
    <location>
        <position position="59"/>
    </location>
    <ligand>
        <name>a divalent metal cation</name>
        <dbReference type="ChEBI" id="CHEBI:60240"/>
        <label>7</label>
        <note>in cluster A</note>
    </ligand>
</feature>